<evidence type="ECO:0000255" key="1">
    <source>
        <dbReference type="HAMAP-Rule" id="MF_00188"/>
    </source>
</evidence>
<dbReference type="EC" id="3.4.24.-" evidence="1"/>
<dbReference type="EMBL" id="AE004092">
    <property type="protein sequence ID" value="AAK33387.2"/>
    <property type="molecule type" value="Genomic_DNA"/>
</dbReference>
<dbReference type="EMBL" id="CP000017">
    <property type="protein sequence ID" value="AAZ50899.1"/>
    <property type="molecule type" value="Genomic_DNA"/>
</dbReference>
<dbReference type="RefSeq" id="NP_268666.2">
    <property type="nucleotide sequence ID" value="NC_002737.2"/>
</dbReference>
<dbReference type="SMR" id="Q9A1D5"/>
<dbReference type="PaxDb" id="1314-HKU360_00319"/>
<dbReference type="KEGG" id="spy:SPy_0331"/>
<dbReference type="KEGG" id="spz:M5005_Spy0280"/>
<dbReference type="PATRIC" id="fig|160490.10.peg.287"/>
<dbReference type="HOGENOM" id="CLU_042266_2_1_9"/>
<dbReference type="Proteomes" id="UP000000750">
    <property type="component" value="Chromosome"/>
</dbReference>
<dbReference type="GO" id="GO:0005886">
    <property type="term" value="C:plasma membrane"/>
    <property type="evidence" value="ECO:0007669"/>
    <property type="project" value="UniProtKB-SubCell"/>
</dbReference>
<dbReference type="GO" id="GO:0004222">
    <property type="term" value="F:metalloendopeptidase activity"/>
    <property type="evidence" value="ECO:0007669"/>
    <property type="project" value="UniProtKB-UniRule"/>
</dbReference>
<dbReference type="GO" id="GO:0008270">
    <property type="term" value="F:zinc ion binding"/>
    <property type="evidence" value="ECO:0007669"/>
    <property type="project" value="UniProtKB-UniRule"/>
</dbReference>
<dbReference type="GO" id="GO:0006508">
    <property type="term" value="P:proteolysis"/>
    <property type="evidence" value="ECO:0007669"/>
    <property type="project" value="UniProtKB-KW"/>
</dbReference>
<dbReference type="CDD" id="cd07340">
    <property type="entry name" value="M48B_Htpx_like"/>
    <property type="match status" value="1"/>
</dbReference>
<dbReference type="Gene3D" id="3.30.2010.10">
    <property type="entry name" value="Metalloproteases ('zincins'), catalytic domain"/>
    <property type="match status" value="1"/>
</dbReference>
<dbReference type="HAMAP" id="MF_00188">
    <property type="entry name" value="Pept_M48_protease_HtpX"/>
    <property type="match status" value="1"/>
</dbReference>
<dbReference type="InterPro" id="IPR050083">
    <property type="entry name" value="HtpX_protease"/>
</dbReference>
<dbReference type="InterPro" id="IPR022919">
    <property type="entry name" value="Pept_M48_protease_HtpX"/>
</dbReference>
<dbReference type="InterPro" id="IPR001915">
    <property type="entry name" value="Peptidase_M48"/>
</dbReference>
<dbReference type="NCBIfam" id="NF003425">
    <property type="entry name" value="PRK04897.1"/>
    <property type="match status" value="1"/>
</dbReference>
<dbReference type="PANTHER" id="PTHR43221">
    <property type="entry name" value="PROTEASE HTPX"/>
    <property type="match status" value="1"/>
</dbReference>
<dbReference type="PANTHER" id="PTHR43221:SF1">
    <property type="entry name" value="PROTEASE HTPX"/>
    <property type="match status" value="1"/>
</dbReference>
<dbReference type="Pfam" id="PF01435">
    <property type="entry name" value="Peptidase_M48"/>
    <property type="match status" value="1"/>
</dbReference>
<feature type="chain" id="PRO_0000138898" description="Protease HtpX homolog">
    <location>
        <begin position="1"/>
        <end position="298"/>
    </location>
</feature>
<feature type="transmembrane region" description="Helical" evidence="1">
    <location>
        <begin position="14"/>
        <end position="34"/>
    </location>
</feature>
<feature type="transmembrane region" description="Helical" evidence="1">
    <location>
        <begin position="39"/>
        <end position="59"/>
    </location>
</feature>
<feature type="transmembrane region" description="Helical" evidence="1">
    <location>
        <begin position="158"/>
        <end position="178"/>
    </location>
</feature>
<feature type="transmembrane region" description="Helical" evidence="1">
    <location>
        <begin position="197"/>
        <end position="217"/>
    </location>
</feature>
<feature type="active site" evidence="1">
    <location>
        <position position="144"/>
    </location>
</feature>
<feature type="binding site" evidence="1">
    <location>
        <position position="143"/>
    </location>
    <ligand>
        <name>Zn(2+)</name>
        <dbReference type="ChEBI" id="CHEBI:29105"/>
        <note>catalytic</note>
    </ligand>
</feature>
<feature type="binding site" evidence="1">
    <location>
        <position position="147"/>
    </location>
    <ligand>
        <name>Zn(2+)</name>
        <dbReference type="ChEBI" id="CHEBI:29105"/>
        <note>catalytic</note>
    </ligand>
</feature>
<feature type="binding site" evidence="1">
    <location>
        <position position="226"/>
    </location>
    <ligand>
        <name>Zn(2+)</name>
        <dbReference type="ChEBI" id="CHEBI:29105"/>
        <note>catalytic</note>
    </ligand>
</feature>
<reference key="1">
    <citation type="journal article" date="2001" name="Proc. Natl. Acad. Sci. U.S.A.">
        <title>Complete genome sequence of an M1 strain of Streptococcus pyogenes.</title>
        <authorList>
            <person name="Ferretti J.J."/>
            <person name="McShan W.M."/>
            <person name="Ajdic D.J."/>
            <person name="Savic D.J."/>
            <person name="Savic G."/>
            <person name="Lyon K."/>
            <person name="Primeaux C."/>
            <person name="Sezate S."/>
            <person name="Suvorov A.N."/>
            <person name="Kenton S."/>
            <person name="Lai H.S."/>
            <person name="Lin S.P."/>
            <person name="Qian Y."/>
            <person name="Jia H.G."/>
            <person name="Najar F.Z."/>
            <person name="Ren Q."/>
            <person name="Zhu H."/>
            <person name="Song L."/>
            <person name="White J."/>
            <person name="Yuan X."/>
            <person name="Clifton S.W."/>
            <person name="Roe B.A."/>
            <person name="McLaughlin R.E."/>
        </authorList>
    </citation>
    <scope>NUCLEOTIDE SEQUENCE [LARGE SCALE GENOMIC DNA]</scope>
    <source>
        <strain>ATCC 700294 / SF370 / Serotype M1</strain>
    </source>
</reference>
<reference key="2">
    <citation type="submission" date="2014-04" db="EMBL/GenBank/DDBJ databases">
        <authorList>
            <person name="Beres S.B."/>
            <person name="Musser J.M."/>
        </authorList>
    </citation>
    <scope>SEQUENCE REVISION TO 19</scope>
</reference>
<reference key="3">
    <citation type="journal article" date="2005" name="J. Infect. Dis.">
        <title>Evolutionary origin and emergence of a highly successful clone of serotype M1 group A Streptococcus involved multiple horizontal gene transfer events.</title>
        <authorList>
            <person name="Sumby P."/>
            <person name="Porcella S.F."/>
            <person name="Madrigal A.G."/>
            <person name="Barbian K.D."/>
            <person name="Virtaneva K."/>
            <person name="Ricklefs S.M."/>
            <person name="Sturdevant D.E."/>
            <person name="Graham M.R."/>
            <person name="Vuopio-Varkila J."/>
            <person name="Hoe N.P."/>
            <person name="Musser J.M."/>
        </authorList>
    </citation>
    <scope>NUCLEOTIDE SEQUENCE [LARGE SCALE GENOMIC DNA]</scope>
    <source>
        <strain>ATCC BAA-947 / MGAS5005 / Serotype M1</strain>
    </source>
</reference>
<sequence>MLYQQISQNKQRTVVLLVVFFALLALIGASAGYLLLDNYAMGLVLALVIGVIYATSMIFQSTSLVMSMNNAREVTEKEAPGFFHIVEDMAMVAQIPMPRVFIIEDPSLNAFATGSSPQNAAVAATTGLLEVMNREELEGVIGHEISHIRNYDIRISTIAVALASAVTVISSIGGRMLWYGGGSRRQRDDGDDDVLRIITLLLSLLSLLLAPLVASLIQLAISRQREYLADASSVELTRNPQGMIKALEKLQLSQPMKHPVDDASAALYINEPRKKRSFSSLFSTHPPIEERIERLKNM</sequence>
<name>HTPX_STRP1</name>
<gene>
    <name evidence="1" type="primary">htpX</name>
    <name type="ordered locus">SPy_0331</name>
    <name type="ordered locus">M5005_Spy0280</name>
</gene>
<proteinExistence type="inferred from homology"/>
<organism>
    <name type="scientific">Streptococcus pyogenes serotype M1</name>
    <dbReference type="NCBI Taxonomy" id="301447"/>
    <lineage>
        <taxon>Bacteria</taxon>
        <taxon>Bacillati</taxon>
        <taxon>Bacillota</taxon>
        <taxon>Bacilli</taxon>
        <taxon>Lactobacillales</taxon>
        <taxon>Streptococcaceae</taxon>
        <taxon>Streptococcus</taxon>
    </lineage>
</organism>
<keyword id="KW-1003">Cell membrane</keyword>
<keyword id="KW-0378">Hydrolase</keyword>
<keyword id="KW-0472">Membrane</keyword>
<keyword id="KW-0479">Metal-binding</keyword>
<keyword id="KW-0482">Metalloprotease</keyword>
<keyword id="KW-0645">Protease</keyword>
<keyword id="KW-1185">Reference proteome</keyword>
<keyword id="KW-0812">Transmembrane</keyword>
<keyword id="KW-1133">Transmembrane helix</keyword>
<keyword id="KW-0862">Zinc</keyword>
<accession>Q9A1D5</accession>
<accession>Q490R9</accession>
<comment type="cofactor">
    <cofactor evidence="1">
        <name>Zn(2+)</name>
        <dbReference type="ChEBI" id="CHEBI:29105"/>
    </cofactor>
    <text evidence="1">Binds 1 zinc ion per subunit.</text>
</comment>
<comment type="subcellular location">
    <subcellularLocation>
        <location evidence="1">Cell membrane</location>
        <topology evidence="1">Multi-pass membrane protein</topology>
    </subcellularLocation>
</comment>
<comment type="similarity">
    <text evidence="1">Belongs to the peptidase M48B family.</text>
</comment>
<protein>
    <recommendedName>
        <fullName evidence="1">Protease HtpX homolog</fullName>
        <ecNumber evidence="1">3.4.24.-</ecNumber>
    </recommendedName>
</protein>